<keyword id="KW-0963">Cytoplasm</keyword>
<keyword id="KW-0396">Initiation factor</keyword>
<keyword id="KW-0648">Protein biosynthesis</keyword>
<keyword id="KW-1185">Reference proteome</keyword>
<keyword id="KW-0694">RNA-binding</keyword>
<keyword id="KW-0699">rRNA-binding</keyword>
<accession>Q9A5V4</accession>
<evidence type="ECO:0000255" key="1">
    <source>
        <dbReference type="HAMAP-Rule" id="MF_00075"/>
    </source>
</evidence>
<dbReference type="EMBL" id="AE005673">
    <property type="protein sequence ID" value="AAK24314.1"/>
    <property type="molecule type" value="Genomic_DNA"/>
</dbReference>
<dbReference type="PIR" id="F87539">
    <property type="entry name" value="F87539"/>
</dbReference>
<dbReference type="RefSeq" id="NP_421146.1">
    <property type="nucleotide sequence ID" value="NC_002696.2"/>
</dbReference>
<dbReference type="RefSeq" id="WP_004617696.1">
    <property type="nucleotide sequence ID" value="NC_002696.2"/>
</dbReference>
<dbReference type="SMR" id="Q9A5V4"/>
<dbReference type="STRING" id="190650.CC_2343"/>
<dbReference type="EnsemblBacteria" id="AAK24314">
    <property type="protein sequence ID" value="AAK24314"/>
    <property type="gene ID" value="CC_2343"/>
</dbReference>
<dbReference type="KEGG" id="ccr:CC_2343"/>
<dbReference type="PATRIC" id="fig|190650.5.peg.2364"/>
<dbReference type="eggNOG" id="COG0361">
    <property type="taxonomic scope" value="Bacteria"/>
</dbReference>
<dbReference type="HOGENOM" id="CLU_151267_1_0_5"/>
<dbReference type="BioCyc" id="CAULO:CC2343-MONOMER"/>
<dbReference type="Proteomes" id="UP000001816">
    <property type="component" value="Chromosome"/>
</dbReference>
<dbReference type="GO" id="GO:0005829">
    <property type="term" value="C:cytosol"/>
    <property type="evidence" value="ECO:0007669"/>
    <property type="project" value="TreeGrafter"/>
</dbReference>
<dbReference type="GO" id="GO:0043022">
    <property type="term" value="F:ribosome binding"/>
    <property type="evidence" value="ECO:0007669"/>
    <property type="project" value="UniProtKB-UniRule"/>
</dbReference>
<dbReference type="GO" id="GO:0019843">
    <property type="term" value="F:rRNA binding"/>
    <property type="evidence" value="ECO:0007669"/>
    <property type="project" value="UniProtKB-UniRule"/>
</dbReference>
<dbReference type="GO" id="GO:0003743">
    <property type="term" value="F:translation initiation factor activity"/>
    <property type="evidence" value="ECO:0007669"/>
    <property type="project" value="UniProtKB-UniRule"/>
</dbReference>
<dbReference type="CDD" id="cd04451">
    <property type="entry name" value="S1_IF1"/>
    <property type="match status" value="1"/>
</dbReference>
<dbReference type="FunFam" id="2.40.50.140:FF:000002">
    <property type="entry name" value="Translation initiation factor IF-1"/>
    <property type="match status" value="1"/>
</dbReference>
<dbReference type="Gene3D" id="2.40.50.140">
    <property type="entry name" value="Nucleic acid-binding proteins"/>
    <property type="match status" value="1"/>
</dbReference>
<dbReference type="HAMAP" id="MF_00075">
    <property type="entry name" value="IF_1"/>
    <property type="match status" value="1"/>
</dbReference>
<dbReference type="InterPro" id="IPR012340">
    <property type="entry name" value="NA-bd_OB-fold"/>
</dbReference>
<dbReference type="InterPro" id="IPR006196">
    <property type="entry name" value="RNA-binding_domain_S1_IF1"/>
</dbReference>
<dbReference type="InterPro" id="IPR004368">
    <property type="entry name" value="TIF_IF1"/>
</dbReference>
<dbReference type="NCBIfam" id="TIGR00008">
    <property type="entry name" value="infA"/>
    <property type="match status" value="1"/>
</dbReference>
<dbReference type="PANTHER" id="PTHR33370">
    <property type="entry name" value="TRANSLATION INITIATION FACTOR IF-1, CHLOROPLASTIC"/>
    <property type="match status" value="1"/>
</dbReference>
<dbReference type="PANTHER" id="PTHR33370:SF1">
    <property type="entry name" value="TRANSLATION INITIATION FACTOR IF-1, CHLOROPLASTIC"/>
    <property type="match status" value="1"/>
</dbReference>
<dbReference type="Pfam" id="PF01176">
    <property type="entry name" value="eIF-1a"/>
    <property type="match status" value="1"/>
</dbReference>
<dbReference type="SUPFAM" id="SSF50249">
    <property type="entry name" value="Nucleic acid-binding proteins"/>
    <property type="match status" value="1"/>
</dbReference>
<dbReference type="PROSITE" id="PS50832">
    <property type="entry name" value="S1_IF1_TYPE"/>
    <property type="match status" value="1"/>
</dbReference>
<comment type="function">
    <text evidence="1">One of the essential components for the initiation of protein synthesis. Stabilizes the binding of IF-2 and IF-3 on the 30S subunit to which N-formylmethionyl-tRNA(fMet) subsequently binds. Helps modulate mRNA selection, yielding the 30S pre-initiation complex (PIC). Upon addition of the 50S ribosomal subunit IF-1, IF-2 and IF-3 are released leaving the mature 70S translation initiation complex.</text>
</comment>
<comment type="subunit">
    <text evidence="1">Component of the 30S ribosomal translation pre-initiation complex which assembles on the 30S ribosome in the order IF-2 and IF-3, IF-1 and N-formylmethionyl-tRNA(fMet); mRNA recruitment can occur at any time during PIC assembly.</text>
</comment>
<comment type="subcellular location">
    <subcellularLocation>
        <location evidence="1">Cytoplasm</location>
    </subcellularLocation>
</comment>
<comment type="similarity">
    <text evidence="1">Belongs to the IF-1 family.</text>
</comment>
<feature type="chain" id="PRO_0000095766" description="Translation initiation factor IF-1">
    <location>
        <begin position="1"/>
        <end position="72"/>
    </location>
</feature>
<feature type="domain" description="S1-like" evidence="1">
    <location>
        <begin position="1"/>
        <end position="72"/>
    </location>
</feature>
<sequence>MAKEELLEFPGTVSELLPNATFRVKLENDHEIIAHTAGKMRKNRIRVLAGDKVLVEMTPYDLTKGRITYRFK</sequence>
<reference key="1">
    <citation type="journal article" date="2001" name="Proc. Natl. Acad. Sci. U.S.A.">
        <title>Complete genome sequence of Caulobacter crescentus.</title>
        <authorList>
            <person name="Nierman W.C."/>
            <person name="Feldblyum T.V."/>
            <person name="Laub M.T."/>
            <person name="Paulsen I.T."/>
            <person name="Nelson K.E."/>
            <person name="Eisen J.A."/>
            <person name="Heidelberg J.F."/>
            <person name="Alley M.R.K."/>
            <person name="Ohta N."/>
            <person name="Maddock J.R."/>
            <person name="Potocka I."/>
            <person name="Nelson W.C."/>
            <person name="Newton A."/>
            <person name="Stephens C."/>
            <person name="Phadke N.D."/>
            <person name="Ely B."/>
            <person name="DeBoy R.T."/>
            <person name="Dodson R.J."/>
            <person name="Durkin A.S."/>
            <person name="Gwinn M.L."/>
            <person name="Haft D.H."/>
            <person name="Kolonay J.F."/>
            <person name="Smit J."/>
            <person name="Craven M.B."/>
            <person name="Khouri H.M."/>
            <person name="Shetty J."/>
            <person name="Berry K.J."/>
            <person name="Utterback T.R."/>
            <person name="Tran K."/>
            <person name="Wolf A.M."/>
            <person name="Vamathevan J.J."/>
            <person name="Ermolaeva M.D."/>
            <person name="White O."/>
            <person name="Salzberg S.L."/>
            <person name="Venter J.C."/>
            <person name="Shapiro L."/>
            <person name="Fraser C.M."/>
        </authorList>
    </citation>
    <scope>NUCLEOTIDE SEQUENCE [LARGE SCALE GENOMIC DNA]</scope>
    <source>
        <strain>ATCC 19089 / CIP 103742 / CB 15</strain>
    </source>
</reference>
<name>IF1_CAUVC</name>
<organism>
    <name type="scientific">Caulobacter vibrioides (strain ATCC 19089 / CIP 103742 / CB 15)</name>
    <name type="common">Caulobacter crescentus</name>
    <dbReference type="NCBI Taxonomy" id="190650"/>
    <lineage>
        <taxon>Bacteria</taxon>
        <taxon>Pseudomonadati</taxon>
        <taxon>Pseudomonadota</taxon>
        <taxon>Alphaproteobacteria</taxon>
        <taxon>Caulobacterales</taxon>
        <taxon>Caulobacteraceae</taxon>
        <taxon>Caulobacter</taxon>
    </lineage>
</organism>
<protein>
    <recommendedName>
        <fullName evidence="1">Translation initiation factor IF-1</fullName>
    </recommendedName>
</protein>
<proteinExistence type="inferred from homology"/>
<gene>
    <name evidence="1" type="primary">infA</name>
    <name type="ordered locus">CC_2343</name>
</gene>